<dbReference type="EC" id="3.1.-.-" evidence="1"/>
<dbReference type="EMBL" id="AK027503">
    <property type="protein sequence ID" value="BAB55160.1"/>
    <property type="molecule type" value="mRNA"/>
</dbReference>
<dbReference type="EMBL" id="AK315532">
    <property type="protein sequence ID" value="BAG37912.1"/>
    <property type="molecule type" value="mRNA"/>
</dbReference>
<dbReference type="EMBL" id="AL121585">
    <property type="status" value="NOT_ANNOTATED_CDS"/>
    <property type="molecule type" value="Genomic_DNA"/>
</dbReference>
<dbReference type="EMBL" id="CH471133">
    <property type="protein sequence ID" value="EAX10260.1"/>
    <property type="molecule type" value="Genomic_DNA"/>
</dbReference>
<dbReference type="EMBL" id="CH471133">
    <property type="protein sequence ID" value="EAX10261.1"/>
    <property type="molecule type" value="Genomic_DNA"/>
</dbReference>
<dbReference type="EMBL" id="BC016869">
    <property type="protein sequence ID" value="AAH16869.1"/>
    <property type="molecule type" value="mRNA"/>
</dbReference>
<dbReference type="CCDS" id="CCDS13131.1"/>
<dbReference type="RefSeq" id="NP_001297267.1">
    <property type="nucleotide sequence ID" value="NM_001310338.1"/>
</dbReference>
<dbReference type="RefSeq" id="NP_001297268.1">
    <property type="nucleotide sequence ID" value="NM_001310339.1"/>
</dbReference>
<dbReference type="RefSeq" id="NP_443097.1">
    <property type="nucleotide sequence ID" value="NM_052865.4"/>
</dbReference>
<dbReference type="RefSeq" id="XP_016883616.1">
    <property type="nucleotide sequence ID" value="XM_017028127.3"/>
</dbReference>
<dbReference type="RefSeq" id="XP_016883617.1">
    <property type="nucleotide sequence ID" value="XM_017028128.2"/>
</dbReference>
<dbReference type="RefSeq" id="XP_054180190.1">
    <property type="nucleotide sequence ID" value="XM_054324215.1"/>
</dbReference>
<dbReference type="RefSeq" id="XP_054180191.1">
    <property type="nucleotide sequence ID" value="XM_054324216.1"/>
</dbReference>
<dbReference type="PDB" id="5ZYT">
    <property type="method" value="X-ray"/>
    <property type="resolution" value="2.70 A"/>
    <property type="chains" value="A/B/C/D=21-344"/>
</dbReference>
<dbReference type="PDB" id="5ZYU">
    <property type="method" value="X-ray"/>
    <property type="resolution" value="1.75 A"/>
    <property type="chains" value="A/B=91-344"/>
</dbReference>
<dbReference type="PDB" id="5ZYV">
    <property type="method" value="X-ray"/>
    <property type="resolution" value="2.72 A"/>
    <property type="chains" value="A=91-344"/>
</dbReference>
<dbReference type="PDB" id="5ZYW">
    <property type="method" value="X-ray"/>
    <property type="resolution" value="2.20 A"/>
    <property type="chains" value="A=91-344"/>
</dbReference>
<dbReference type="PDB" id="8XA9">
    <property type="method" value="X-ray"/>
    <property type="resolution" value="2.32 A"/>
    <property type="chains" value="A/B=95-344"/>
</dbReference>
<dbReference type="PDBsum" id="5ZYT"/>
<dbReference type="PDBsum" id="5ZYU"/>
<dbReference type="PDBsum" id="5ZYV"/>
<dbReference type="PDBsum" id="5ZYW"/>
<dbReference type="PDBsum" id="8XA9"/>
<dbReference type="SMR" id="Q9BQP7"/>
<dbReference type="BioGRID" id="124964">
    <property type="interactions" value="140"/>
</dbReference>
<dbReference type="FunCoup" id="Q9BQP7">
    <property type="interactions" value="1596"/>
</dbReference>
<dbReference type="IntAct" id="Q9BQP7">
    <property type="interactions" value="70"/>
</dbReference>
<dbReference type="MINT" id="Q9BQP7"/>
<dbReference type="STRING" id="9606.ENSP00000366939"/>
<dbReference type="GlyGen" id="Q9BQP7">
    <property type="glycosylation" value="1 site, 1 O-linked glycan (1 site)"/>
</dbReference>
<dbReference type="iPTMnet" id="Q9BQP7"/>
<dbReference type="PhosphoSitePlus" id="Q9BQP7"/>
<dbReference type="SwissPalm" id="Q9BQP7"/>
<dbReference type="BioMuta" id="MGME1"/>
<dbReference type="DMDM" id="25452901"/>
<dbReference type="jPOST" id="Q9BQP7"/>
<dbReference type="MassIVE" id="Q9BQP7"/>
<dbReference type="PaxDb" id="9606-ENSP00000366939"/>
<dbReference type="PeptideAtlas" id="Q9BQP7"/>
<dbReference type="ProteomicsDB" id="78703"/>
<dbReference type="Pumba" id="Q9BQP7"/>
<dbReference type="Antibodypedia" id="48613">
    <property type="antibodies" value="80 antibodies from 19 providers"/>
</dbReference>
<dbReference type="DNASU" id="92667"/>
<dbReference type="Ensembl" id="ENST00000377710.10">
    <property type="protein sequence ID" value="ENSP00000366939.5"/>
    <property type="gene ID" value="ENSG00000125871.14"/>
</dbReference>
<dbReference type="GeneID" id="92667"/>
<dbReference type="KEGG" id="hsa:92667"/>
<dbReference type="MANE-Select" id="ENST00000377710.10">
    <property type="protein sequence ID" value="ENSP00000366939.5"/>
    <property type="RefSeq nucleotide sequence ID" value="NM_052865.4"/>
    <property type="RefSeq protein sequence ID" value="NP_443097.1"/>
</dbReference>
<dbReference type="UCSC" id="uc002wqh.5">
    <property type="organism name" value="human"/>
</dbReference>
<dbReference type="AGR" id="HGNC:16205"/>
<dbReference type="CTD" id="92667"/>
<dbReference type="DisGeNET" id="92667"/>
<dbReference type="GeneCards" id="MGME1"/>
<dbReference type="HGNC" id="HGNC:16205">
    <property type="gene designation" value="MGME1"/>
</dbReference>
<dbReference type="HPA" id="ENSG00000125871">
    <property type="expression patterns" value="Low tissue specificity"/>
</dbReference>
<dbReference type="MalaCards" id="MGME1"/>
<dbReference type="MIM" id="615076">
    <property type="type" value="gene"/>
</dbReference>
<dbReference type="MIM" id="615084">
    <property type="type" value="phenotype"/>
</dbReference>
<dbReference type="neXtProt" id="NX_Q9BQP7"/>
<dbReference type="OpenTargets" id="ENSG00000125871"/>
<dbReference type="Orphanet" id="352447">
    <property type="disease" value="Progressive external ophthalmoplegia-myopathy-emaciation syndrome"/>
</dbReference>
<dbReference type="PharmGKB" id="PA25783"/>
<dbReference type="VEuPathDB" id="HostDB:ENSG00000125871"/>
<dbReference type="eggNOG" id="ENOG502QVKE">
    <property type="taxonomic scope" value="Eukaryota"/>
</dbReference>
<dbReference type="GeneTree" id="ENSGT00390000003349"/>
<dbReference type="InParanoid" id="Q9BQP7"/>
<dbReference type="OMA" id="DCVAKYQ"/>
<dbReference type="OrthoDB" id="5777131at2759"/>
<dbReference type="PAN-GO" id="Q9BQP7">
    <property type="GO annotations" value="3 GO annotations based on evolutionary models"/>
</dbReference>
<dbReference type="PhylomeDB" id="Q9BQP7"/>
<dbReference type="TreeFam" id="TF320375"/>
<dbReference type="PathwayCommons" id="Q9BQP7"/>
<dbReference type="Reactome" id="R-HSA-9913635">
    <property type="pathway name" value="Strand-asynchronous mitochondrial DNA replication"/>
</dbReference>
<dbReference type="SignaLink" id="Q9BQP7"/>
<dbReference type="BioGRID-ORCS" id="92667">
    <property type="hits" value="15 hits in 1155 CRISPR screens"/>
</dbReference>
<dbReference type="ChiTaRS" id="MGME1">
    <property type="organism name" value="human"/>
</dbReference>
<dbReference type="GenomeRNAi" id="92667"/>
<dbReference type="Pharos" id="Q9BQP7">
    <property type="development level" value="Tbio"/>
</dbReference>
<dbReference type="PRO" id="PR:Q9BQP7"/>
<dbReference type="Proteomes" id="UP000005640">
    <property type="component" value="Chromosome 20"/>
</dbReference>
<dbReference type="RNAct" id="Q9BQP7">
    <property type="molecule type" value="protein"/>
</dbReference>
<dbReference type="Bgee" id="ENSG00000125871">
    <property type="expression patterns" value="Expressed in upper arm skin and 182 other cell types or tissues"/>
</dbReference>
<dbReference type="ExpressionAtlas" id="Q9BQP7">
    <property type="expression patterns" value="baseline and differential"/>
</dbReference>
<dbReference type="GO" id="GO:0005759">
    <property type="term" value="C:mitochondrial matrix"/>
    <property type="evidence" value="ECO:0000304"/>
    <property type="project" value="Reactome"/>
</dbReference>
<dbReference type="GO" id="GO:0005739">
    <property type="term" value="C:mitochondrion"/>
    <property type="evidence" value="ECO:0000314"/>
    <property type="project" value="UniProtKB"/>
</dbReference>
<dbReference type="GO" id="GO:0017108">
    <property type="term" value="F:5'-flap endonuclease activity"/>
    <property type="evidence" value="ECO:0000269"/>
    <property type="project" value="Reactome"/>
</dbReference>
<dbReference type="GO" id="GO:0045145">
    <property type="term" value="F:single-stranded DNA 5'-3' DNA exonuclease activity"/>
    <property type="evidence" value="ECO:0000314"/>
    <property type="project" value="UniProtKB"/>
</dbReference>
<dbReference type="GO" id="GO:0008297">
    <property type="term" value="F:single-stranded DNA exodeoxyribonuclease activity"/>
    <property type="evidence" value="ECO:0000318"/>
    <property type="project" value="GO_Central"/>
</dbReference>
<dbReference type="GO" id="GO:0043504">
    <property type="term" value="P:mitochondrial DNA repair"/>
    <property type="evidence" value="ECO:0000304"/>
    <property type="project" value="UniProtKB"/>
</dbReference>
<dbReference type="GO" id="GO:0006264">
    <property type="term" value="P:mitochondrial DNA replication"/>
    <property type="evidence" value="ECO:0000315"/>
    <property type="project" value="UniProtKB"/>
</dbReference>
<dbReference type="GO" id="GO:0000002">
    <property type="term" value="P:mitochondrial genome maintenance"/>
    <property type="evidence" value="ECO:0000315"/>
    <property type="project" value="UniProtKB"/>
</dbReference>
<dbReference type="FunFam" id="3.90.320.10:FF:000005">
    <property type="entry name" value="Mitochondrial genome maintenance exonuclease 1"/>
    <property type="match status" value="1"/>
</dbReference>
<dbReference type="Gene3D" id="3.90.320.10">
    <property type="match status" value="1"/>
</dbReference>
<dbReference type="HAMAP" id="MF_03030">
    <property type="entry name" value="MGME1"/>
    <property type="match status" value="1"/>
</dbReference>
<dbReference type="InterPro" id="IPR011604">
    <property type="entry name" value="PDDEXK-like_dom_sf"/>
</dbReference>
<dbReference type="InterPro" id="IPR038726">
    <property type="entry name" value="PDDEXK_AddAB-type"/>
</dbReference>
<dbReference type="InterPro" id="IPR011335">
    <property type="entry name" value="Restrct_endonuc-II-like"/>
</dbReference>
<dbReference type="PANTHER" id="PTHR31340">
    <property type="entry name" value="MITOCHONDRIAL GENOME MAINTENANCE EXONUCLEASE 1"/>
    <property type="match status" value="1"/>
</dbReference>
<dbReference type="PANTHER" id="PTHR31340:SF3">
    <property type="entry name" value="MITOCHONDRIAL GENOME MAINTENANCE EXONUCLEASE 1"/>
    <property type="match status" value="1"/>
</dbReference>
<dbReference type="Pfam" id="PF12705">
    <property type="entry name" value="PDDEXK_1"/>
    <property type="match status" value="1"/>
</dbReference>
<dbReference type="SUPFAM" id="SSF52980">
    <property type="entry name" value="Restriction endonuclease-like"/>
    <property type="match status" value="1"/>
</dbReference>
<reference key="1">
    <citation type="journal article" date="2004" name="Nat. Genet.">
        <title>Complete sequencing and characterization of 21,243 full-length human cDNAs.</title>
        <authorList>
            <person name="Ota T."/>
            <person name="Suzuki Y."/>
            <person name="Nishikawa T."/>
            <person name="Otsuki T."/>
            <person name="Sugiyama T."/>
            <person name="Irie R."/>
            <person name="Wakamatsu A."/>
            <person name="Hayashi K."/>
            <person name="Sato H."/>
            <person name="Nagai K."/>
            <person name="Kimura K."/>
            <person name="Makita H."/>
            <person name="Sekine M."/>
            <person name="Obayashi M."/>
            <person name="Nishi T."/>
            <person name="Shibahara T."/>
            <person name="Tanaka T."/>
            <person name="Ishii S."/>
            <person name="Yamamoto J."/>
            <person name="Saito K."/>
            <person name="Kawai Y."/>
            <person name="Isono Y."/>
            <person name="Nakamura Y."/>
            <person name="Nagahari K."/>
            <person name="Murakami K."/>
            <person name="Yasuda T."/>
            <person name="Iwayanagi T."/>
            <person name="Wagatsuma M."/>
            <person name="Shiratori A."/>
            <person name="Sudo H."/>
            <person name="Hosoiri T."/>
            <person name="Kaku Y."/>
            <person name="Kodaira H."/>
            <person name="Kondo H."/>
            <person name="Sugawara M."/>
            <person name="Takahashi M."/>
            <person name="Kanda K."/>
            <person name="Yokoi T."/>
            <person name="Furuya T."/>
            <person name="Kikkawa E."/>
            <person name="Omura Y."/>
            <person name="Abe K."/>
            <person name="Kamihara K."/>
            <person name="Katsuta N."/>
            <person name="Sato K."/>
            <person name="Tanikawa M."/>
            <person name="Yamazaki M."/>
            <person name="Ninomiya K."/>
            <person name="Ishibashi T."/>
            <person name="Yamashita H."/>
            <person name="Murakawa K."/>
            <person name="Fujimori K."/>
            <person name="Tanai H."/>
            <person name="Kimata M."/>
            <person name="Watanabe M."/>
            <person name="Hiraoka S."/>
            <person name="Chiba Y."/>
            <person name="Ishida S."/>
            <person name="Ono Y."/>
            <person name="Takiguchi S."/>
            <person name="Watanabe S."/>
            <person name="Yosida M."/>
            <person name="Hotuta T."/>
            <person name="Kusano J."/>
            <person name="Kanehori K."/>
            <person name="Takahashi-Fujii A."/>
            <person name="Hara H."/>
            <person name="Tanase T.-O."/>
            <person name="Nomura Y."/>
            <person name="Togiya S."/>
            <person name="Komai F."/>
            <person name="Hara R."/>
            <person name="Takeuchi K."/>
            <person name="Arita M."/>
            <person name="Imose N."/>
            <person name="Musashino K."/>
            <person name="Yuuki H."/>
            <person name="Oshima A."/>
            <person name="Sasaki N."/>
            <person name="Aotsuka S."/>
            <person name="Yoshikawa Y."/>
            <person name="Matsunawa H."/>
            <person name="Ichihara T."/>
            <person name="Shiohata N."/>
            <person name="Sano S."/>
            <person name="Moriya S."/>
            <person name="Momiyama H."/>
            <person name="Satoh N."/>
            <person name="Takami S."/>
            <person name="Terashima Y."/>
            <person name="Suzuki O."/>
            <person name="Nakagawa S."/>
            <person name="Senoh A."/>
            <person name="Mizoguchi H."/>
            <person name="Goto Y."/>
            <person name="Shimizu F."/>
            <person name="Wakebe H."/>
            <person name="Hishigaki H."/>
            <person name="Watanabe T."/>
            <person name="Sugiyama A."/>
            <person name="Takemoto M."/>
            <person name="Kawakami B."/>
            <person name="Yamazaki M."/>
            <person name="Watanabe K."/>
            <person name="Kumagai A."/>
            <person name="Itakura S."/>
            <person name="Fukuzumi Y."/>
            <person name="Fujimori Y."/>
            <person name="Komiyama M."/>
            <person name="Tashiro H."/>
            <person name="Tanigami A."/>
            <person name="Fujiwara T."/>
            <person name="Ono T."/>
            <person name="Yamada K."/>
            <person name="Fujii Y."/>
            <person name="Ozaki K."/>
            <person name="Hirao M."/>
            <person name="Ohmori Y."/>
            <person name="Kawabata A."/>
            <person name="Hikiji T."/>
            <person name="Kobatake N."/>
            <person name="Inagaki H."/>
            <person name="Ikema Y."/>
            <person name="Okamoto S."/>
            <person name="Okitani R."/>
            <person name="Kawakami T."/>
            <person name="Noguchi S."/>
            <person name="Itoh T."/>
            <person name="Shigeta K."/>
            <person name="Senba T."/>
            <person name="Matsumura K."/>
            <person name="Nakajima Y."/>
            <person name="Mizuno T."/>
            <person name="Morinaga M."/>
            <person name="Sasaki M."/>
            <person name="Togashi T."/>
            <person name="Oyama M."/>
            <person name="Hata H."/>
            <person name="Watanabe M."/>
            <person name="Komatsu T."/>
            <person name="Mizushima-Sugano J."/>
            <person name="Satoh T."/>
            <person name="Shirai Y."/>
            <person name="Takahashi Y."/>
            <person name="Nakagawa K."/>
            <person name="Okumura K."/>
            <person name="Nagase T."/>
            <person name="Nomura N."/>
            <person name="Kikuchi H."/>
            <person name="Masuho Y."/>
            <person name="Yamashita R."/>
            <person name="Nakai K."/>
            <person name="Yada T."/>
            <person name="Nakamura Y."/>
            <person name="Ohara O."/>
            <person name="Isogai T."/>
            <person name="Sugano S."/>
        </authorList>
    </citation>
    <scope>NUCLEOTIDE SEQUENCE [LARGE SCALE MRNA]</scope>
    <source>
        <tissue>Teratocarcinoma</tissue>
    </source>
</reference>
<reference key="2">
    <citation type="journal article" date="2001" name="Nature">
        <title>The DNA sequence and comparative analysis of human chromosome 20.</title>
        <authorList>
            <person name="Deloukas P."/>
            <person name="Matthews L.H."/>
            <person name="Ashurst J.L."/>
            <person name="Burton J."/>
            <person name="Gilbert J.G.R."/>
            <person name="Jones M."/>
            <person name="Stavrides G."/>
            <person name="Almeida J.P."/>
            <person name="Babbage A.K."/>
            <person name="Bagguley C.L."/>
            <person name="Bailey J."/>
            <person name="Barlow K.F."/>
            <person name="Bates K.N."/>
            <person name="Beard L.M."/>
            <person name="Beare D.M."/>
            <person name="Beasley O.P."/>
            <person name="Bird C.P."/>
            <person name="Blakey S.E."/>
            <person name="Bridgeman A.M."/>
            <person name="Brown A.J."/>
            <person name="Buck D."/>
            <person name="Burrill W.D."/>
            <person name="Butler A.P."/>
            <person name="Carder C."/>
            <person name="Carter N.P."/>
            <person name="Chapman J.C."/>
            <person name="Clamp M."/>
            <person name="Clark G."/>
            <person name="Clark L.N."/>
            <person name="Clark S.Y."/>
            <person name="Clee C.M."/>
            <person name="Clegg S."/>
            <person name="Cobley V.E."/>
            <person name="Collier R.E."/>
            <person name="Connor R.E."/>
            <person name="Corby N.R."/>
            <person name="Coulson A."/>
            <person name="Coville G.J."/>
            <person name="Deadman R."/>
            <person name="Dhami P.D."/>
            <person name="Dunn M."/>
            <person name="Ellington A.G."/>
            <person name="Frankland J.A."/>
            <person name="Fraser A."/>
            <person name="French L."/>
            <person name="Garner P."/>
            <person name="Grafham D.V."/>
            <person name="Griffiths C."/>
            <person name="Griffiths M.N.D."/>
            <person name="Gwilliam R."/>
            <person name="Hall R.E."/>
            <person name="Hammond S."/>
            <person name="Harley J.L."/>
            <person name="Heath P.D."/>
            <person name="Ho S."/>
            <person name="Holden J.L."/>
            <person name="Howden P.J."/>
            <person name="Huckle E."/>
            <person name="Hunt A.R."/>
            <person name="Hunt S.E."/>
            <person name="Jekosch K."/>
            <person name="Johnson C.M."/>
            <person name="Johnson D."/>
            <person name="Kay M.P."/>
            <person name="Kimberley A.M."/>
            <person name="King A."/>
            <person name="Knights A."/>
            <person name="Laird G.K."/>
            <person name="Lawlor S."/>
            <person name="Lehvaeslaiho M.H."/>
            <person name="Leversha M.A."/>
            <person name="Lloyd C."/>
            <person name="Lloyd D.M."/>
            <person name="Lovell J.D."/>
            <person name="Marsh V.L."/>
            <person name="Martin S.L."/>
            <person name="McConnachie L.J."/>
            <person name="McLay K."/>
            <person name="McMurray A.A."/>
            <person name="Milne S.A."/>
            <person name="Mistry D."/>
            <person name="Moore M.J.F."/>
            <person name="Mullikin J.C."/>
            <person name="Nickerson T."/>
            <person name="Oliver K."/>
            <person name="Parker A."/>
            <person name="Patel R."/>
            <person name="Pearce T.A.V."/>
            <person name="Peck A.I."/>
            <person name="Phillimore B.J.C.T."/>
            <person name="Prathalingam S.R."/>
            <person name="Plumb R.W."/>
            <person name="Ramsay H."/>
            <person name="Rice C.M."/>
            <person name="Ross M.T."/>
            <person name="Scott C.E."/>
            <person name="Sehra H.K."/>
            <person name="Shownkeen R."/>
            <person name="Sims S."/>
            <person name="Skuce C.D."/>
            <person name="Smith M.L."/>
            <person name="Soderlund C."/>
            <person name="Steward C.A."/>
            <person name="Sulston J.E."/>
            <person name="Swann R.M."/>
            <person name="Sycamore N."/>
            <person name="Taylor R."/>
            <person name="Tee L."/>
            <person name="Thomas D.W."/>
            <person name="Thorpe A."/>
            <person name="Tracey A."/>
            <person name="Tromans A.C."/>
            <person name="Vaudin M."/>
            <person name="Wall M."/>
            <person name="Wallis J.M."/>
            <person name="Whitehead S.L."/>
            <person name="Whittaker P."/>
            <person name="Willey D.L."/>
            <person name="Williams L."/>
            <person name="Williams S.A."/>
            <person name="Wilming L."/>
            <person name="Wray P.W."/>
            <person name="Hubbard T."/>
            <person name="Durbin R.M."/>
            <person name="Bentley D.R."/>
            <person name="Beck S."/>
            <person name="Rogers J."/>
        </authorList>
    </citation>
    <scope>NUCLEOTIDE SEQUENCE [LARGE SCALE GENOMIC DNA]</scope>
</reference>
<reference key="3">
    <citation type="submission" date="2005-09" db="EMBL/GenBank/DDBJ databases">
        <authorList>
            <person name="Mural R.J."/>
            <person name="Istrail S."/>
            <person name="Sutton G.G."/>
            <person name="Florea L."/>
            <person name="Halpern A.L."/>
            <person name="Mobarry C.M."/>
            <person name="Lippert R."/>
            <person name="Walenz B."/>
            <person name="Shatkay H."/>
            <person name="Dew I."/>
            <person name="Miller J.R."/>
            <person name="Flanigan M.J."/>
            <person name="Edwards N.J."/>
            <person name="Bolanos R."/>
            <person name="Fasulo D."/>
            <person name="Halldorsson B.V."/>
            <person name="Hannenhalli S."/>
            <person name="Turner R."/>
            <person name="Yooseph S."/>
            <person name="Lu F."/>
            <person name="Nusskern D.R."/>
            <person name="Shue B.C."/>
            <person name="Zheng X.H."/>
            <person name="Zhong F."/>
            <person name="Delcher A.L."/>
            <person name="Huson D.H."/>
            <person name="Kravitz S.A."/>
            <person name="Mouchard L."/>
            <person name="Reinert K."/>
            <person name="Remington K.A."/>
            <person name="Clark A.G."/>
            <person name="Waterman M.S."/>
            <person name="Eichler E.E."/>
            <person name="Adams M.D."/>
            <person name="Hunkapiller M.W."/>
            <person name="Myers E.W."/>
            <person name="Venter J.C."/>
        </authorList>
    </citation>
    <scope>NUCLEOTIDE SEQUENCE [LARGE SCALE GENOMIC DNA]</scope>
</reference>
<reference key="4">
    <citation type="journal article" date="2004" name="Genome Res.">
        <title>The status, quality, and expansion of the NIH full-length cDNA project: the Mammalian Gene Collection (MGC).</title>
        <authorList>
            <consortium name="The MGC Project Team"/>
        </authorList>
    </citation>
    <scope>NUCLEOTIDE SEQUENCE [LARGE SCALE MRNA]</scope>
    <source>
        <tissue>Colon</tissue>
    </source>
</reference>
<reference key="5">
    <citation type="journal article" date="2008" name="Proc. Natl. Acad. Sci. U.S.A.">
        <title>A quantitative atlas of mitotic phosphorylation.</title>
        <authorList>
            <person name="Dephoure N."/>
            <person name="Zhou C."/>
            <person name="Villen J."/>
            <person name="Beausoleil S.A."/>
            <person name="Bakalarski C.E."/>
            <person name="Elledge S.J."/>
            <person name="Gygi S.P."/>
        </authorList>
    </citation>
    <scope>PHOSPHORYLATION [LARGE SCALE ANALYSIS] AT SER-343</scope>
    <scope>IDENTIFICATION BY MASS SPECTROMETRY [LARGE SCALE ANALYSIS]</scope>
    <source>
        <tissue>Cervix carcinoma</tissue>
    </source>
</reference>
<reference key="6">
    <citation type="journal article" date="2009" name="Anal. Chem.">
        <title>Lys-N and trypsin cover complementary parts of the phosphoproteome in a refined SCX-based approach.</title>
        <authorList>
            <person name="Gauci S."/>
            <person name="Helbig A.O."/>
            <person name="Slijper M."/>
            <person name="Krijgsveld J."/>
            <person name="Heck A.J."/>
            <person name="Mohammed S."/>
        </authorList>
    </citation>
    <scope>IDENTIFICATION BY MASS SPECTROMETRY [LARGE SCALE ANALYSIS]</scope>
</reference>
<reference key="7">
    <citation type="journal article" date="2011" name="BMC Syst. Biol.">
        <title>Initial characterization of the human central proteome.</title>
        <authorList>
            <person name="Burkard T.R."/>
            <person name="Planyavsky M."/>
            <person name="Kaupe I."/>
            <person name="Breitwieser F.P."/>
            <person name="Buerckstuemmer T."/>
            <person name="Bennett K.L."/>
            <person name="Superti-Furga G."/>
            <person name="Colinge J."/>
        </authorList>
    </citation>
    <scope>IDENTIFICATION BY MASS SPECTROMETRY [LARGE SCALE ANALYSIS]</scope>
</reference>
<reference key="8">
    <citation type="journal article" date="2013" name="Nat. Genet.">
        <title>Loss-of-function mutations in MGME1 impair mtDNA replication and cause multisystemic mitochondrial disease.</title>
        <authorList>
            <person name="Kornblum C."/>
            <person name="Nicholls T.J."/>
            <person name="Haack T.B."/>
            <person name="Scholer S."/>
            <person name="Peeva V."/>
            <person name="Danhauser K."/>
            <person name="Hallmann K."/>
            <person name="Zsurka G."/>
            <person name="Rorbach J."/>
            <person name="Iuso A."/>
            <person name="Wieland T."/>
            <person name="Sciacco M."/>
            <person name="Ronchi D."/>
            <person name="Comi G.P."/>
            <person name="Moggio M."/>
            <person name="Quinzii C.M."/>
            <person name="Dimauro S."/>
            <person name="Calvo S.E."/>
            <person name="Mootha V.K."/>
            <person name="Klopstock T."/>
            <person name="Strom T.M."/>
            <person name="Meitinger T."/>
            <person name="Minczuk M."/>
            <person name="Kunz W.S."/>
            <person name="Prokisch H."/>
        </authorList>
    </citation>
    <scope>FUNCTION</scope>
    <scope>SUBCELLULAR LOCATION</scope>
    <scope>VARIANT MTDPS11 CYS-233</scope>
    <scope>CHARACTERIZATION OF VARIANT MTDPS11 CYS-233</scope>
    <scope>MUTAGENESIS OF LYS-253</scope>
</reference>
<reference key="9">
    <citation type="journal article" date="2013" name="Nucleic Acids Res.">
        <title>Identification of a novel human mitochondrial endo-/exonuclease Ddk1/c20orf72 necessary for maintenance of proper 7S DNA levels.</title>
        <authorList>
            <person name="Szczesny R.J."/>
            <person name="Hejnowicz M.S."/>
            <person name="Steczkiewicz K."/>
            <person name="Muszewska A."/>
            <person name="Borowski L.S."/>
            <person name="Ginalski K."/>
            <person name="Dziembowski A."/>
        </authorList>
    </citation>
    <scope>FUNCTION</scope>
    <scope>CATALYTIC ACTIVITY</scope>
    <scope>METAL-DEPENDENCY</scope>
    <scope>SUBCELLULAR LOCATION</scope>
    <scope>ACTIVE SITE</scope>
    <scope>MUTAGENESIS OF ASP-251 AND LYS-253</scope>
</reference>
<reference key="10">
    <citation type="journal article" date="2015" name="Proteomics">
        <title>N-terminome analysis of the human mitochondrial proteome.</title>
        <authorList>
            <person name="Vaca Jacome A.S."/>
            <person name="Rabilloud T."/>
            <person name="Schaeffer-Reiss C."/>
            <person name="Rompais M."/>
            <person name="Ayoub D."/>
            <person name="Lane L."/>
            <person name="Bairoch A."/>
            <person name="Van Dorsselaer A."/>
            <person name="Carapito C."/>
        </authorList>
    </citation>
    <scope>IDENTIFICATION BY MASS SPECTROMETRY [LARGE SCALE ANALYSIS]</scope>
</reference>
<comment type="function">
    <text evidence="1 2 3">Metal-dependent single-stranded DNA (ssDNA) exonuclease involved in mitochondrial genome maintenance. Has preference for 5'-3' exonuclease activity but is also capable of endonuclease activity on linear substrates. Necessary for maintenance of proper 7S DNA levels. Probably involved in mitochondrial DNA (mtDNA) repair, possibly via the processing of displaced DNA containing Okazaki fragments during RNA-primed DNA synthesis on the lagging strand or via processing of DNA flaps during long-patch base excision repair. Specifically binds 5-hydroxymethylcytosine (5hmC)-containing DNA in stem cells.</text>
</comment>
<comment type="interaction">
    <interactant intactId="EBI-739561">
        <id>Q9BQP7</id>
    </interactant>
    <interactant intactId="EBI-10303987">
        <id>Q9UHG0</id>
        <label>DCDC2</label>
    </interactant>
    <organismsDiffer>false</organismsDiffer>
    <experiments>3</experiments>
</comment>
<comment type="interaction">
    <interactant intactId="EBI-739561">
        <id>Q9BQP7</id>
    </interactant>
    <interactant intactId="EBI-79165">
        <id>Q9NRD5</id>
        <label>PICK1</label>
    </interactant>
    <organismsDiffer>false</organismsDiffer>
    <experiments>3</experiments>
</comment>
<comment type="subcellular location">
    <subcellularLocation>
        <location evidence="1 2 3">Mitochondrion</location>
    </subcellularLocation>
</comment>
<comment type="disease" evidence="2">
    <disease id="DI-03645">
        <name>Mitochondrial DNA depletion syndrome 11</name>
        <acronym>MTDPS11</acronym>
        <description>An autosomal recessive mitochondrial disorder characterized by onset in childhood or adulthood of progressive external ophthalmoplegia, muscle weakness and atrophy, exercise intolerance, and respiratory insufficiency due to muscle weakness. More variable features include spinal deformity, emaciation, and cardiac abnormalities. Skeletal muscle biopsies show deletion and depletion of mitochondrial DNA (mtDNA) with variable defects in respiratory chain enzyme activities.</description>
        <dbReference type="MIM" id="615084"/>
    </disease>
    <text>The disease may be caused by variants affecting the gene represented in this entry.</text>
</comment>
<comment type="miscellaneous">
    <text evidence="1">This protein may be expected to contain an N-terminal transit peptide but none has been predicted.</text>
</comment>
<comment type="similarity">
    <text evidence="1">Belongs to the MGME1 family.</text>
</comment>
<sequence>MKMKLFQTICRQLRSSKFSVESAALVAFSTSSYSCGRKKKVNPYEEVDQEKYSNLVQSVLSSRGVAQTPGSVEEDALLCGPVSKHKLPNQGEDRRVPQNWFPIFNPERSDKPNASDPSVPLKIPLQRNVIPSVTRVLQQTMTKQQVFLLERWKQRMILELGEDGFKEYTSNVFLQGKRFHEALESILSPQETLKERDENLLKSGYIESVQHILKDVSGVRALESAVQHETLNYIGLLDCVAEYQGKLCVIDWKTSEKPKPFIQSTFDNPLQVVAYMGAMNHDTNYSFQVQCGLIVVAYKDGSPAHPHFMDAELCSQYWTKWLLRLEEYTEKKKNQNIQKPEYSE</sequence>
<evidence type="ECO:0000255" key="1">
    <source>
        <dbReference type="HAMAP-Rule" id="MF_03030"/>
    </source>
</evidence>
<evidence type="ECO:0000269" key="2">
    <source>
    </source>
</evidence>
<evidence type="ECO:0000269" key="3">
    <source>
    </source>
</evidence>
<evidence type="ECO:0000305" key="4"/>
<evidence type="ECO:0007744" key="5">
    <source>
    </source>
</evidence>
<evidence type="ECO:0007829" key="6">
    <source>
        <dbReference type="PDB" id="5ZYU"/>
    </source>
</evidence>
<evidence type="ECO:0007829" key="7">
    <source>
        <dbReference type="PDB" id="5ZYW"/>
    </source>
</evidence>
<organism>
    <name type="scientific">Homo sapiens</name>
    <name type="common">Human</name>
    <dbReference type="NCBI Taxonomy" id="9606"/>
    <lineage>
        <taxon>Eukaryota</taxon>
        <taxon>Metazoa</taxon>
        <taxon>Chordata</taxon>
        <taxon>Craniata</taxon>
        <taxon>Vertebrata</taxon>
        <taxon>Euteleostomi</taxon>
        <taxon>Mammalia</taxon>
        <taxon>Eutheria</taxon>
        <taxon>Euarchontoglires</taxon>
        <taxon>Primates</taxon>
        <taxon>Haplorrhini</taxon>
        <taxon>Catarrhini</taxon>
        <taxon>Hominidae</taxon>
        <taxon>Homo</taxon>
    </lineage>
</organism>
<protein>
    <recommendedName>
        <fullName evidence="1">Mitochondrial genome maintenance exonuclease 1</fullName>
        <ecNumber evidence="1">3.1.-.-</ecNumber>
    </recommendedName>
</protein>
<accession>Q9BQP7</accession>
<accession>B2RDG5</accession>
<accession>D3DW29</accession>
<accession>Q96SW3</accession>
<gene>
    <name evidence="1" type="primary">MGME1</name>
    <name type="synonym">C20orf72</name>
    <name type="synonym">DDK1</name>
</gene>
<proteinExistence type="evidence at protein level"/>
<name>MGME1_HUMAN</name>
<feature type="chain" id="PRO_0000079439" description="Mitochondrial genome maintenance exonuclease 1">
    <location>
        <begin position="1"/>
        <end position="344"/>
    </location>
</feature>
<feature type="active site" evidence="3">
    <location>
        <position position="238"/>
    </location>
</feature>
<feature type="active site" evidence="3">
    <location>
        <position position="251"/>
    </location>
</feature>
<feature type="active site" evidence="3">
    <location>
        <position position="253"/>
    </location>
</feature>
<feature type="modified residue" description="Phosphoserine" evidence="5">
    <location>
        <position position="343"/>
    </location>
</feature>
<feature type="sequence variant" id="VAR_033758" description="In dbSNP:rs11551768.">
    <original>S</original>
    <variation>C</variation>
    <location>
        <position position="15"/>
    </location>
</feature>
<feature type="sequence variant" id="VAR_069102" description="In MTDPS11; impaired exonuclease activity; dbSNP:rs587776944." evidence="2">
    <original>Y</original>
    <variation>C</variation>
    <location>
        <position position="233"/>
    </location>
</feature>
<feature type="mutagenesis site" description="Abolishes catalytic activity." evidence="3">
    <original>D</original>
    <variation>A</variation>
    <location>
        <position position="251"/>
    </location>
</feature>
<feature type="mutagenesis site" description="Abolishes catalytic activity." evidence="2 3">
    <original>K</original>
    <variation>A</variation>
    <location>
        <position position="253"/>
    </location>
</feature>
<feature type="mutagenesis site" description="Abolishes exonuclease activity." evidence="2 3">
    <original>K</original>
    <variation>A</variation>
    <location>
        <position position="253"/>
    </location>
</feature>
<feature type="sequence conflict" description="In Ref. 1; BAB55160." evidence="4" ref="1">
    <original>F</original>
    <variation>L</variation>
    <location>
        <position position="308"/>
    </location>
</feature>
<feature type="strand" evidence="7">
    <location>
        <begin position="108"/>
        <end position="110"/>
    </location>
</feature>
<feature type="helix" evidence="6">
    <location>
        <begin position="126"/>
        <end position="129"/>
    </location>
</feature>
<feature type="helix" evidence="6">
    <location>
        <begin position="133"/>
        <end position="138"/>
    </location>
</feature>
<feature type="helix" evidence="6">
    <location>
        <begin position="143"/>
        <end position="160"/>
    </location>
</feature>
<feature type="helix" evidence="6">
    <location>
        <begin position="162"/>
        <end position="187"/>
    </location>
</feature>
<feature type="helix" evidence="6">
    <location>
        <begin position="200"/>
        <end position="202"/>
    </location>
</feature>
<feature type="helix" evidence="6">
    <location>
        <begin position="204"/>
        <end position="208"/>
    </location>
</feature>
<feature type="helix" evidence="6">
    <location>
        <begin position="210"/>
        <end position="213"/>
    </location>
</feature>
<feature type="strand" evidence="6">
    <location>
        <begin position="216"/>
        <end position="228"/>
    </location>
</feature>
<feature type="turn" evidence="6">
    <location>
        <begin position="229"/>
        <end position="232"/>
    </location>
</feature>
<feature type="strand" evidence="6">
    <location>
        <begin position="233"/>
        <end position="243"/>
    </location>
</feature>
<feature type="strand" evidence="6">
    <location>
        <begin position="246"/>
        <end position="254"/>
    </location>
</feature>
<feature type="helix" evidence="6">
    <location>
        <begin position="262"/>
        <end position="265"/>
    </location>
</feature>
<feature type="helix" evidence="6">
    <location>
        <begin position="268"/>
        <end position="280"/>
    </location>
</feature>
<feature type="strand" evidence="6">
    <location>
        <begin position="291"/>
        <end position="297"/>
    </location>
</feature>
<feature type="strand" evidence="6">
    <location>
        <begin position="305"/>
        <end position="309"/>
    </location>
</feature>
<feature type="helix" evidence="6">
    <location>
        <begin position="311"/>
        <end position="333"/>
    </location>
</feature>
<keyword id="KW-0002">3D-structure</keyword>
<keyword id="KW-0225">Disease variant</keyword>
<keyword id="KW-0227">DNA damage</keyword>
<keyword id="KW-0234">DNA repair</keyword>
<keyword id="KW-0269">Exonuclease</keyword>
<keyword id="KW-0378">Hydrolase</keyword>
<keyword id="KW-0496">Mitochondrion</keyword>
<keyword id="KW-0540">Nuclease</keyword>
<keyword id="KW-0597">Phosphoprotein</keyword>
<keyword id="KW-1274">Primary mitochondrial disease</keyword>
<keyword id="KW-0935">Progressive external ophthalmoplegia</keyword>
<keyword id="KW-1267">Proteomics identification</keyword>
<keyword id="KW-1185">Reference proteome</keyword>